<gene>
    <name type="primary">EEF1A1</name>
    <name type="synonym">EEF1A</name>
</gene>
<proteinExistence type="evidence at transcript level"/>
<organism>
    <name type="scientific">Pongo abelii</name>
    <name type="common">Sumatran orangutan</name>
    <name type="synonym">Pongo pygmaeus abelii</name>
    <dbReference type="NCBI Taxonomy" id="9601"/>
    <lineage>
        <taxon>Eukaryota</taxon>
        <taxon>Metazoa</taxon>
        <taxon>Chordata</taxon>
        <taxon>Craniata</taxon>
        <taxon>Vertebrata</taxon>
        <taxon>Euteleostomi</taxon>
        <taxon>Mammalia</taxon>
        <taxon>Eutheria</taxon>
        <taxon>Euarchontoglires</taxon>
        <taxon>Primates</taxon>
        <taxon>Haplorrhini</taxon>
        <taxon>Catarrhini</taxon>
        <taxon>Hominidae</taxon>
        <taxon>Pongo</taxon>
    </lineage>
</organism>
<comment type="function">
    <text evidence="3 4">Translation elongation factor that catalyzes the GTP-dependent binding of aminoacyl-tRNA (aa-tRNA) to the A-site of ribosomes during the elongation phase of protein synthesis. Base pairing between the mRNA codon and the aa-tRNA anticodon promotes GTP hydrolysis, releasing the aa-tRNA from EEF1A1 and allowing its accommodation into the ribosome. The growing protein chain is subsequently transferred from the P-site peptidyl tRNA to the A-site aa-tRNA, extending it by one amino acid through ribosome-catalyzed peptide bond formation. Also plays a role in the positive regulation of IFNG transcription in T-helper 1 cells as part of an IFNG promoter-binding complex with TXK and PARP1 (By similarity). Also plays a role in cytoskeleton organization by promoting actin bundling (By similarity).</text>
</comment>
<comment type="catalytic activity">
    <reaction evidence="3">
        <text>GTP + H2O = GDP + phosphate + H(+)</text>
        <dbReference type="Rhea" id="RHEA:19669"/>
        <dbReference type="ChEBI" id="CHEBI:15377"/>
        <dbReference type="ChEBI" id="CHEBI:15378"/>
        <dbReference type="ChEBI" id="CHEBI:37565"/>
        <dbReference type="ChEBI" id="CHEBI:43474"/>
        <dbReference type="ChEBI" id="CHEBI:58189"/>
    </reaction>
    <physiologicalReaction direction="left-to-right" evidence="3">
        <dbReference type="Rhea" id="RHEA:19670"/>
    </physiologicalReaction>
</comment>
<comment type="subunit">
    <text evidence="2 3">Found in a nuclear export complex with XPO5, EEF1A1, Ran and aminoacylated tRNA. Interacts with PARP1 and TXK. Interacts with KARS1. May interact with ERGIC2. Interacts with IFIT1 (via TPR repeats 4-7) (By similarity). Interacts with DLC1, facilitating distribution to the membrane periphery and ruffles upon growth factor stimulation. Interacts with ZPR1; the interaction occurs in a epidermal growth factor (EGF)-dependent manner (By similarity). Interacts with PPP1R16B (By similarity). Interacts with SPHK1 and SPHK2; both interactions increase SPHK1 and SPHK2 kinase activity (By similarity). Interacts with guanyl-nucleotide exchange factor EEF1B2 (By similarity). Interacts (via middle-region) with HTATIP2 (via N-terminus); the interaction is direct and competes with EEF1A1 binding to guanyl-nucleotide exchange factor EEF1B2, thereby inhibiting GDP for GTP exchange and reactivation of EEF1A1 (By similarity). Interacts with tRNA (By similarity).</text>
</comment>
<comment type="subcellular location">
    <subcellularLocation>
        <location evidence="3">Cytoplasm</location>
    </subcellularLocation>
    <subcellularLocation>
        <location evidence="3">Nucleus</location>
    </subcellularLocation>
    <subcellularLocation>
        <location evidence="3">Nucleus</location>
        <location evidence="3">Nucleolus</location>
    </subcellularLocation>
    <subcellularLocation>
        <location evidence="3">Cell membrane</location>
    </subcellularLocation>
    <text evidence="3">Colocalizes with DLC1 at actin-rich regions in the cell periphery. Translocates together with ZPR1 from the cytoplasm to the nucleus and nucleolus after treatment with mitogens. Localization at the cell membrane depends on EEF1A1 phosphorylation status and the presence of PPP1R16B.</text>
</comment>
<comment type="PTM">
    <text evidence="3">ISGylated.</text>
</comment>
<comment type="PTM">
    <text evidence="3">Phosphorylated by TXK. Phosphorylation by PASK increases translation efficiency. Phosphorylated by ROCK2. Phosphorylation by TGFBR1 inhibits translation elongation.</text>
</comment>
<comment type="PTM">
    <text evidence="3">Trimethylated at Lys-79 by EEF1AKMT1. Methylated at Lys-165 by EEF1AKMT3, methylation by EEF1AKMT3 is dynamic as well as inducible by stress conditions, such as ER-stress, and plays a regulatory role on mRNA translation. Trimethylated at Lys-318 by EEF1AKMT2. Mono-, di-, and trimethylated at Lys-36 by EEF1AKMT4; trimethylated form is predominant. Methylation by EEF1AKMT4 contributes to the fine-tuning of translation rates for a subset of tRNAs. Trimethylated at Gly-2 by METTL13. Mono- and dimethylated at Lys-55 by METTL13; dimethylated form is predominant.</text>
</comment>
<comment type="PTM">
    <text evidence="3">Ubiquitinated at Lys-385 by RNF14 in response to ribosome collisions (ribosome stalling), leading to its degradation by the proteasome and rescue of stalled ribosomes.</text>
</comment>
<comment type="similarity">
    <text evidence="6">Belongs to the TRAFAC class translation factor GTPase superfamily. Classic translation factor GTPase family. EF-Tu/EF-1A subfamily.</text>
</comment>
<dbReference type="EC" id="3.6.5.-" evidence="3"/>
<dbReference type="EMBL" id="CR861176">
    <property type="protein sequence ID" value="CAH93248.1"/>
    <property type="molecule type" value="mRNA"/>
</dbReference>
<dbReference type="EMBL" id="CR926083">
    <property type="protein sequence ID" value="CAI29710.1"/>
    <property type="molecule type" value="mRNA"/>
</dbReference>
<dbReference type="RefSeq" id="NP_001126911.1">
    <property type="nucleotide sequence ID" value="NM_001133439.1"/>
</dbReference>
<dbReference type="RefSeq" id="XP_009240283.1">
    <property type="nucleotide sequence ID" value="XM_009242008.1"/>
</dbReference>
<dbReference type="RefSeq" id="XP_009240413.1">
    <property type="nucleotide sequence ID" value="XM_009242138.1"/>
</dbReference>
<dbReference type="RefSeq" id="XP_063580755.1">
    <property type="nucleotide sequence ID" value="XM_063724685.1"/>
</dbReference>
<dbReference type="RefSeq" id="XP_063580756.1">
    <property type="nucleotide sequence ID" value="XM_063724686.1"/>
</dbReference>
<dbReference type="SMR" id="Q5R4R8"/>
<dbReference type="FunCoup" id="Q5R4R8">
    <property type="interactions" value="2097"/>
</dbReference>
<dbReference type="STRING" id="9601.ENSPPYP00000018935"/>
<dbReference type="Ensembl" id="ENSPPYT00000019520.2">
    <property type="protein sequence ID" value="ENSPPYP00000018778.1"/>
    <property type="gene ID" value="ENSPPYG00000016777.3"/>
</dbReference>
<dbReference type="GeneID" id="100173928"/>
<dbReference type="KEGG" id="pon:100173928"/>
<dbReference type="KEGG" id="pon:100455760"/>
<dbReference type="CTD" id="1915"/>
<dbReference type="eggNOG" id="KOG0052">
    <property type="taxonomic scope" value="Eukaryota"/>
</dbReference>
<dbReference type="GeneTree" id="ENSGT00950000183029"/>
<dbReference type="HOGENOM" id="CLU_007265_3_5_1"/>
<dbReference type="InParanoid" id="Q5R4R8"/>
<dbReference type="OrthoDB" id="9515202at2759"/>
<dbReference type="TreeFam" id="TF300304"/>
<dbReference type="Proteomes" id="UP000001595">
    <property type="component" value="Chromosome 6"/>
</dbReference>
<dbReference type="GO" id="GO:0005737">
    <property type="term" value="C:cytoplasm"/>
    <property type="evidence" value="ECO:0000250"/>
    <property type="project" value="UniProtKB"/>
</dbReference>
<dbReference type="GO" id="GO:0005730">
    <property type="term" value="C:nucleolus"/>
    <property type="evidence" value="ECO:0000250"/>
    <property type="project" value="UniProtKB"/>
</dbReference>
<dbReference type="GO" id="GO:0005634">
    <property type="term" value="C:nucleus"/>
    <property type="evidence" value="ECO:0000250"/>
    <property type="project" value="UniProtKB"/>
</dbReference>
<dbReference type="GO" id="GO:0005886">
    <property type="term" value="C:plasma membrane"/>
    <property type="evidence" value="ECO:0000250"/>
    <property type="project" value="UniProtKB"/>
</dbReference>
<dbReference type="GO" id="GO:0005525">
    <property type="term" value="F:GTP binding"/>
    <property type="evidence" value="ECO:0007669"/>
    <property type="project" value="UniProtKB-KW"/>
</dbReference>
<dbReference type="GO" id="GO:0003924">
    <property type="term" value="F:GTPase activity"/>
    <property type="evidence" value="ECO:0000250"/>
    <property type="project" value="UniProtKB"/>
</dbReference>
<dbReference type="GO" id="GO:0019209">
    <property type="term" value="F:kinase activator activity"/>
    <property type="evidence" value="ECO:0000250"/>
    <property type="project" value="UniProtKB"/>
</dbReference>
<dbReference type="GO" id="GO:0003746">
    <property type="term" value="F:translation elongation factor activity"/>
    <property type="evidence" value="ECO:0000250"/>
    <property type="project" value="UniProtKB"/>
</dbReference>
<dbReference type="GO" id="GO:0071364">
    <property type="term" value="P:cellular response to epidermal growth factor stimulus"/>
    <property type="evidence" value="ECO:0000250"/>
    <property type="project" value="UniProtKB"/>
</dbReference>
<dbReference type="GO" id="GO:0006414">
    <property type="term" value="P:translational elongation"/>
    <property type="evidence" value="ECO:0000250"/>
    <property type="project" value="UniProtKB"/>
</dbReference>
<dbReference type="CDD" id="cd01883">
    <property type="entry name" value="EF1_alpha"/>
    <property type="match status" value="1"/>
</dbReference>
<dbReference type="CDD" id="cd03693">
    <property type="entry name" value="EF1_alpha_II"/>
    <property type="match status" value="1"/>
</dbReference>
<dbReference type="CDD" id="cd03705">
    <property type="entry name" value="EF1_alpha_III"/>
    <property type="match status" value="1"/>
</dbReference>
<dbReference type="FunFam" id="2.40.30.10:FF:000005">
    <property type="entry name" value="Elongation factor 1-alpha"/>
    <property type="match status" value="1"/>
</dbReference>
<dbReference type="FunFam" id="3.40.50.300:FF:000090">
    <property type="entry name" value="Elongation factor 1-alpha"/>
    <property type="match status" value="1"/>
</dbReference>
<dbReference type="FunFam" id="2.40.30.10:FF:000168">
    <property type="entry name" value="Elongation factor 1-alpha 2"/>
    <property type="match status" value="1"/>
</dbReference>
<dbReference type="Gene3D" id="3.40.50.300">
    <property type="entry name" value="P-loop containing nucleotide triphosphate hydrolases"/>
    <property type="match status" value="1"/>
</dbReference>
<dbReference type="Gene3D" id="2.40.30.10">
    <property type="entry name" value="Translation factors"/>
    <property type="match status" value="2"/>
</dbReference>
<dbReference type="HAMAP" id="MF_00118_A">
    <property type="entry name" value="EF_Tu_A"/>
    <property type="match status" value="1"/>
</dbReference>
<dbReference type="InterPro" id="IPR004161">
    <property type="entry name" value="EFTu-like_2"/>
</dbReference>
<dbReference type="InterPro" id="IPR031157">
    <property type="entry name" value="G_TR_CS"/>
</dbReference>
<dbReference type="InterPro" id="IPR054696">
    <property type="entry name" value="GTP-eEF1A_C"/>
</dbReference>
<dbReference type="InterPro" id="IPR027417">
    <property type="entry name" value="P-loop_NTPase"/>
</dbReference>
<dbReference type="InterPro" id="IPR000795">
    <property type="entry name" value="T_Tr_GTP-bd_dom"/>
</dbReference>
<dbReference type="InterPro" id="IPR050100">
    <property type="entry name" value="TRAFAC_GTPase_members"/>
</dbReference>
<dbReference type="InterPro" id="IPR009000">
    <property type="entry name" value="Transl_B-barrel_sf"/>
</dbReference>
<dbReference type="InterPro" id="IPR009001">
    <property type="entry name" value="Transl_elong_EF1A/Init_IF2_C"/>
</dbReference>
<dbReference type="InterPro" id="IPR004539">
    <property type="entry name" value="Transl_elong_EF1A_euk/arc"/>
</dbReference>
<dbReference type="NCBIfam" id="TIGR00483">
    <property type="entry name" value="EF-1_alpha"/>
    <property type="match status" value="1"/>
</dbReference>
<dbReference type="NCBIfam" id="NF008969">
    <property type="entry name" value="PRK12317.1"/>
    <property type="match status" value="1"/>
</dbReference>
<dbReference type="PANTHER" id="PTHR23115">
    <property type="entry name" value="TRANSLATION FACTOR"/>
    <property type="match status" value="1"/>
</dbReference>
<dbReference type="Pfam" id="PF22594">
    <property type="entry name" value="GTP-eEF1A_C"/>
    <property type="match status" value="1"/>
</dbReference>
<dbReference type="Pfam" id="PF00009">
    <property type="entry name" value="GTP_EFTU"/>
    <property type="match status" value="1"/>
</dbReference>
<dbReference type="Pfam" id="PF03144">
    <property type="entry name" value="GTP_EFTU_D2"/>
    <property type="match status" value="1"/>
</dbReference>
<dbReference type="PRINTS" id="PR00315">
    <property type="entry name" value="ELONGATNFCT"/>
</dbReference>
<dbReference type="SUPFAM" id="SSF50465">
    <property type="entry name" value="EF-Tu/eEF-1alpha/eIF2-gamma C-terminal domain"/>
    <property type="match status" value="1"/>
</dbReference>
<dbReference type="SUPFAM" id="SSF52540">
    <property type="entry name" value="P-loop containing nucleoside triphosphate hydrolases"/>
    <property type="match status" value="1"/>
</dbReference>
<dbReference type="SUPFAM" id="SSF50447">
    <property type="entry name" value="Translation proteins"/>
    <property type="match status" value="1"/>
</dbReference>
<dbReference type="PROSITE" id="PS00301">
    <property type="entry name" value="G_TR_1"/>
    <property type="match status" value="1"/>
</dbReference>
<dbReference type="PROSITE" id="PS51722">
    <property type="entry name" value="G_TR_2"/>
    <property type="match status" value="1"/>
</dbReference>
<keyword id="KW-0007">Acetylation</keyword>
<keyword id="KW-1003">Cell membrane</keyword>
<keyword id="KW-0963">Cytoplasm</keyword>
<keyword id="KW-0251">Elongation factor</keyword>
<keyword id="KW-0342">GTP-binding</keyword>
<keyword id="KW-0378">Hydrolase</keyword>
<keyword id="KW-1017">Isopeptide bond</keyword>
<keyword id="KW-0472">Membrane</keyword>
<keyword id="KW-0488">Methylation</keyword>
<keyword id="KW-0547">Nucleotide-binding</keyword>
<keyword id="KW-0539">Nucleus</keyword>
<keyword id="KW-0597">Phosphoprotein</keyword>
<keyword id="KW-0648">Protein biosynthesis</keyword>
<keyword id="KW-1185">Reference proteome</keyword>
<keyword id="KW-0832">Ubl conjugation</keyword>
<evidence type="ECO:0000250" key="1">
    <source>
        <dbReference type="UniProtKB" id="P10126"/>
    </source>
</evidence>
<evidence type="ECO:0000250" key="2">
    <source>
        <dbReference type="UniProtKB" id="P62630"/>
    </source>
</evidence>
<evidence type="ECO:0000250" key="3">
    <source>
        <dbReference type="UniProtKB" id="P68104"/>
    </source>
</evidence>
<evidence type="ECO:0000250" key="4">
    <source>
        <dbReference type="UniProtKB" id="P68105"/>
    </source>
</evidence>
<evidence type="ECO:0000255" key="5"/>
<evidence type="ECO:0000305" key="6"/>
<sequence length="462" mass="50141">MGKEKTHINIVVIGHVDSGKSTTTGHLIYKCGGIDKRTIEKFEKEAAEMGKGSFKYAWVLDKLKAERERGITIDISLWKFETSKYYVTIIDAPGHRDFIKNMITGTSQADCAVLIVAAGVGEFEAGISKNGQTREHALLAYTLGVKQLIVGVNKMDSTEPPYSQKRYEEIVKEVSTYIKKIGYNPDTVAFVPISGWNGDNMLEPSANMPWFKGWKVTRKDGNASGTTLLEALDCILPPTRPTDKPLRLPLQDVYKIGGIGTVPVGRVETGVLKPGMVVTFAPVNVTTEVKSVEMHHEALSEALPGDNVGFNVKNVSVKDVRRGNVAGDSKNDPPMEAAGFTAQVIILNHPGQISAGYAPVLDCHTAHIACKFAELKEKIDRRSGKKLEDGPKFLKSGDAAIVDMVPGKPMCVESFSDYPPLGRFAVRDMRQTVAVGVIKAVDKKAAGAGKVTKSAQKAQKAK</sequence>
<name>EF1A1_PONAB</name>
<reference key="1">
    <citation type="submission" date="2004-11" db="EMBL/GenBank/DDBJ databases">
        <authorList>
            <consortium name="The German cDNA consortium"/>
        </authorList>
    </citation>
    <scope>NUCLEOTIDE SEQUENCE [LARGE SCALE MRNA]</scope>
    <source>
        <tissue>Brain cortex</tissue>
    </source>
</reference>
<accession>Q5R4R8</accession>
<accession>Q5NVF3</accession>
<protein>
    <recommendedName>
        <fullName>Elongation factor 1-alpha 1</fullName>
        <shortName>EF-1-alpha-1</shortName>
        <ecNumber evidence="3">3.6.5.-</ecNumber>
    </recommendedName>
    <alternativeName>
        <fullName>Elongation factor Tu</fullName>
        <shortName>EF-Tu</shortName>
    </alternativeName>
    <alternativeName>
        <fullName>Eukaryotic elongation factor 1 A-1</fullName>
        <shortName>eEF1A-1</shortName>
    </alternativeName>
</protein>
<feature type="initiator methionine" description="Removed" evidence="3">
    <location>
        <position position="1"/>
    </location>
</feature>
<feature type="chain" id="PRO_0000090888" description="Elongation factor 1-alpha 1">
    <location>
        <begin position="2"/>
        <end position="462"/>
    </location>
</feature>
<feature type="domain" description="tr-type G">
    <location>
        <begin position="5"/>
        <end position="242"/>
    </location>
</feature>
<feature type="region of interest" description="G1" evidence="5">
    <location>
        <begin position="14"/>
        <end position="21"/>
    </location>
</feature>
<feature type="region of interest" description="G2" evidence="5">
    <location>
        <begin position="70"/>
        <end position="74"/>
    </location>
</feature>
<feature type="region of interest" description="G3" evidence="5">
    <location>
        <begin position="91"/>
        <end position="94"/>
    </location>
</feature>
<feature type="region of interest" description="G4" evidence="5">
    <location>
        <begin position="153"/>
        <end position="156"/>
    </location>
</feature>
<feature type="region of interest" description="G5" evidence="5">
    <location>
        <begin position="194"/>
        <end position="196"/>
    </location>
</feature>
<feature type="binding site" evidence="4">
    <location>
        <begin position="14"/>
        <end position="21"/>
    </location>
    <ligand>
        <name>GTP</name>
        <dbReference type="ChEBI" id="CHEBI:37565"/>
    </ligand>
</feature>
<feature type="binding site" evidence="4">
    <location>
        <begin position="153"/>
        <end position="156"/>
    </location>
    <ligand>
        <name>GTP</name>
        <dbReference type="ChEBI" id="CHEBI:37565"/>
    </ligand>
</feature>
<feature type="binding site" evidence="4">
    <location>
        <begin position="194"/>
        <end position="196"/>
    </location>
    <ligand>
        <name>GTP</name>
        <dbReference type="ChEBI" id="CHEBI:37565"/>
    </ligand>
</feature>
<feature type="modified residue" description="N,N,N-trimethylglycine" evidence="3">
    <location>
        <position position="2"/>
    </location>
</feature>
<feature type="modified residue" description="N6,N6,N6-trimethyllysine; alternate" evidence="3">
    <location>
        <position position="36"/>
    </location>
</feature>
<feature type="modified residue" description="N6,N6-dimethyllysine; alternate" evidence="3">
    <location>
        <position position="36"/>
    </location>
</feature>
<feature type="modified residue" description="N6-methyllysine; alternate" evidence="3">
    <location>
        <position position="36"/>
    </location>
</feature>
<feature type="modified residue" description="N6,N6-dimethyllysine" evidence="3">
    <location>
        <position position="55"/>
    </location>
</feature>
<feature type="modified residue" description="N6,N6,N6-trimethyllysine; by EEF1AKMT1" evidence="3">
    <location>
        <position position="79"/>
    </location>
</feature>
<feature type="modified residue" description="N6,N6,N6-trimethyllysine; alternate; by EEF1AKMT3" evidence="3">
    <location>
        <position position="165"/>
    </location>
</feature>
<feature type="modified residue" description="N6,N6-dimethyllysine; alternate; by EEF1AKMT3" evidence="3">
    <location>
        <position position="165"/>
    </location>
</feature>
<feature type="modified residue" description="N6-acetyllysine; alternate" evidence="1">
    <location>
        <position position="165"/>
    </location>
</feature>
<feature type="modified residue" description="N6-methyllysine; alternate; by EEF1AKMT3" evidence="3">
    <location>
        <position position="165"/>
    </location>
</feature>
<feature type="modified residue" description="N6-acetyllysine" evidence="1">
    <location>
        <position position="172"/>
    </location>
</feature>
<feature type="modified residue" description="N6-acetyllysine" evidence="1">
    <location>
        <position position="273"/>
    </location>
</feature>
<feature type="modified residue" description="Phosphoserine; by TGFBR1" evidence="3">
    <location>
        <position position="300"/>
    </location>
</feature>
<feature type="modified residue" description="5-glutamyl glycerylphosphorylethanolamine" evidence="3">
    <location>
        <position position="301"/>
    </location>
</feature>
<feature type="modified residue" description="N6,N6,N6-trimethyllysine; by EEF1AKMT2" evidence="3">
    <location>
        <position position="318"/>
    </location>
</feature>
<feature type="modified residue" description="5-glutamyl glycerylphosphorylethanolamine" evidence="3">
    <location>
        <position position="374"/>
    </location>
</feature>
<feature type="modified residue" description="N6-acetyllysine; alternate" evidence="1">
    <location>
        <position position="392"/>
    </location>
</feature>
<feature type="modified residue" description="N6-succinyllysine; alternate" evidence="1">
    <location>
        <position position="392"/>
    </location>
</feature>
<feature type="modified residue" description="Phosphothreonine; by PASK" evidence="3">
    <location>
        <position position="432"/>
    </location>
</feature>
<feature type="modified residue" description="N6-acetyllysine" evidence="1">
    <location>
        <position position="439"/>
    </location>
</feature>
<feature type="cross-link" description="Glycyl lysine isopeptide (Lys-Gly) (interchain with G-Cter in ubiquitin)" evidence="3">
    <location>
        <position position="385"/>
    </location>
</feature>
<feature type="sequence conflict" description="In Ref. 1; CAI29710." evidence="6" ref="1">
    <original>V</original>
    <variation>A</variation>
    <location>
        <position position="253"/>
    </location>
</feature>
<feature type="sequence conflict" description="In Ref. 1; CAH93248." evidence="6" ref="1">
    <original>M</original>
    <variation>V</variation>
    <location>
        <position position="276"/>
    </location>
</feature>